<dbReference type="EMBL" id="BX284601">
    <property type="protein sequence ID" value="CAA98121.1"/>
    <property type="molecule type" value="Genomic_DNA"/>
</dbReference>
<dbReference type="EMBL" id="BX284601">
    <property type="protein sequence ID" value="CAB54209.1"/>
    <property type="molecule type" value="Genomic_DNA"/>
</dbReference>
<dbReference type="PIR" id="T20359">
    <property type="entry name" value="T20359"/>
</dbReference>
<dbReference type="PIR" id="T20360">
    <property type="entry name" value="T20360"/>
</dbReference>
<dbReference type="RefSeq" id="NP_492124.1">
    <molecule id="P90794-1"/>
    <property type="nucleotide sequence ID" value="NM_059723.7"/>
</dbReference>
<dbReference type="RefSeq" id="NP_492125.1">
    <molecule id="P90794-2"/>
    <property type="nucleotide sequence ID" value="NM_059724.4"/>
</dbReference>
<dbReference type="SMR" id="P90794"/>
<dbReference type="BioGRID" id="37960">
    <property type="interactions" value="6"/>
</dbReference>
<dbReference type="DIP" id="DIP-26027N"/>
<dbReference type="FunCoup" id="P90794">
    <property type="interactions" value="2470"/>
</dbReference>
<dbReference type="STRING" id="6239.D2030.9a.2"/>
<dbReference type="PaxDb" id="6239-D2030.9a.1"/>
<dbReference type="EnsemblMetazoa" id="D2030.9a.1">
    <molecule id="P90794-1"/>
    <property type="protein sequence ID" value="D2030.9a.1"/>
    <property type="gene ID" value="WBGene00008419"/>
</dbReference>
<dbReference type="EnsemblMetazoa" id="D2030.9a.2">
    <molecule id="P90794-1"/>
    <property type="protein sequence ID" value="D2030.9a.2"/>
    <property type="gene ID" value="WBGene00008419"/>
</dbReference>
<dbReference type="EnsemblMetazoa" id="D2030.9b.1">
    <molecule id="P90794-2"/>
    <property type="protein sequence ID" value="D2030.9b.1"/>
    <property type="gene ID" value="WBGene00008419"/>
</dbReference>
<dbReference type="GeneID" id="172518"/>
<dbReference type="KEGG" id="cel:CELE_D2030.9"/>
<dbReference type="UCSC" id="D2030.9a">
    <property type="organism name" value="c. elegans"/>
</dbReference>
<dbReference type="AGR" id="WB:WBGene00008419"/>
<dbReference type="CTD" id="172518"/>
<dbReference type="WormBase" id="D2030.9a">
    <molecule id="P90794-1"/>
    <property type="protein sequence ID" value="CE09086"/>
    <property type="gene ID" value="WBGene00008419"/>
    <property type="gene designation" value="wdr-23"/>
</dbReference>
<dbReference type="WormBase" id="D2030.9b">
    <molecule id="P90794-2"/>
    <property type="protein sequence ID" value="CE23620"/>
    <property type="gene ID" value="WBGene00008419"/>
    <property type="gene designation" value="wdr-23"/>
</dbReference>
<dbReference type="eggNOG" id="KOG0266">
    <property type="taxonomic scope" value="Eukaryota"/>
</dbReference>
<dbReference type="InParanoid" id="P90794"/>
<dbReference type="OMA" id="PFYPMMI"/>
<dbReference type="OrthoDB" id="63070at2759"/>
<dbReference type="PhylomeDB" id="P90794"/>
<dbReference type="Reactome" id="R-CEL-8951664">
    <property type="pathway name" value="Neddylation"/>
</dbReference>
<dbReference type="PRO" id="PR:P90794"/>
<dbReference type="Proteomes" id="UP000001940">
    <property type="component" value="Chromosome I"/>
</dbReference>
<dbReference type="Bgee" id="WBGene00008419">
    <property type="expression patterns" value="Expressed in pharyngeal muscle cell (C elegans) and 4 other cell types or tissues"/>
</dbReference>
<dbReference type="ExpressionAtlas" id="P90794">
    <property type="expression patterns" value="baseline and differential"/>
</dbReference>
<dbReference type="GO" id="GO:0030424">
    <property type="term" value="C:axon"/>
    <property type="evidence" value="ECO:0000314"/>
    <property type="project" value="WormBase"/>
</dbReference>
<dbReference type="GO" id="GO:0080008">
    <property type="term" value="C:Cul4-RING E3 ubiquitin ligase complex"/>
    <property type="evidence" value="ECO:0000318"/>
    <property type="project" value="GO_Central"/>
</dbReference>
<dbReference type="GO" id="GO:0005737">
    <property type="term" value="C:cytoplasm"/>
    <property type="evidence" value="ECO:0000314"/>
    <property type="project" value="WormBase"/>
</dbReference>
<dbReference type="GO" id="GO:0005741">
    <property type="term" value="C:mitochondrial outer membrane"/>
    <property type="evidence" value="ECO:0000314"/>
    <property type="project" value="WormBase"/>
</dbReference>
<dbReference type="GO" id="GO:0005739">
    <property type="term" value="C:mitochondrion"/>
    <property type="evidence" value="ECO:0000314"/>
    <property type="project" value="WormBase"/>
</dbReference>
<dbReference type="GO" id="GO:0043025">
    <property type="term" value="C:neuronal cell body"/>
    <property type="evidence" value="ECO:0000314"/>
    <property type="project" value="WormBase"/>
</dbReference>
<dbReference type="GO" id="GO:0005634">
    <property type="term" value="C:nucleus"/>
    <property type="evidence" value="ECO:0000314"/>
    <property type="project" value="WormBase"/>
</dbReference>
<dbReference type="GO" id="GO:0055120">
    <property type="term" value="C:striated muscle dense body"/>
    <property type="evidence" value="ECO:0000314"/>
    <property type="project" value="WormBase"/>
</dbReference>
<dbReference type="GO" id="GO:0008021">
    <property type="term" value="C:synaptic vesicle"/>
    <property type="evidence" value="ECO:0000314"/>
    <property type="project" value="WormBase"/>
</dbReference>
<dbReference type="GO" id="GO:0061629">
    <property type="term" value="F:RNA polymerase II-specific DNA-binding transcription factor binding"/>
    <property type="evidence" value="ECO:0000353"/>
    <property type="project" value="WormBase"/>
</dbReference>
<dbReference type="GO" id="GO:1990748">
    <property type="term" value="P:cellular detoxification"/>
    <property type="evidence" value="ECO:0000316"/>
    <property type="project" value="UniProtKB"/>
</dbReference>
<dbReference type="GO" id="GO:0008340">
    <property type="term" value="P:determination of adult lifespan"/>
    <property type="evidence" value="ECO:0000315"/>
    <property type="project" value="UniProtKB"/>
</dbReference>
<dbReference type="GO" id="GO:1905803">
    <property type="term" value="P:negative regulation of cellular response to manganese ion"/>
    <property type="evidence" value="ECO:0000315"/>
    <property type="project" value="UniProtKB"/>
</dbReference>
<dbReference type="GO" id="GO:0000122">
    <property type="term" value="P:negative regulation of transcription by RNA polymerase II"/>
    <property type="evidence" value="ECO:0000315"/>
    <property type="project" value="WormBase"/>
</dbReference>
<dbReference type="GO" id="GO:0040018">
    <property type="term" value="P:positive regulation of multicellular organism growth"/>
    <property type="evidence" value="ECO:0000315"/>
    <property type="project" value="WormBase"/>
</dbReference>
<dbReference type="GO" id="GO:0043161">
    <property type="term" value="P:proteasome-mediated ubiquitin-dependent protein catabolic process"/>
    <property type="evidence" value="ECO:0000315"/>
    <property type="project" value="WormBase"/>
</dbReference>
<dbReference type="GO" id="GO:0080135">
    <property type="term" value="P:regulation of cellular response to stress"/>
    <property type="evidence" value="ECO:0000315"/>
    <property type="project" value="WormBase"/>
</dbReference>
<dbReference type="FunFam" id="2.130.10.10:FF:001891">
    <property type="entry name" value="DDB1-and CUL4-associated factor 11 homolog"/>
    <property type="match status" value="1"/>
</dbReference>
<dbReference type="FunFam" id="2.130.10.10:FF:002367">
    <property type="entry name" value="DDB1-and CUL4-associated factor 11 homolog"/>
    <property type="match status" value="1"/>
</dbReference>
<dbReference type="Gene3D" id="2.130.10.10">
    <property type="entry name" value="YVTN repeat-like/Quinoprotein amine dehydrogenase"/>
    <property type="match status" value="2"/>
</dbReference>
<dbReference type="InterPro" id="IPR051859">
    <property type="entry name" value="DCAF"/>
</dbReference>
<dbReference type="InterPro" id="IPR017399">
    <property type="entry name" value="DCAF11/LEC14B"/>
</dbReference>
<dbReference type="InterPro" id="IPR015943">
    <property type="entry name" value="WD40/YVTN_repeat-like_dom_sf"/>
</dbReference>
<dbReference type="InterPro" id="IPR036322">
    <property type="entry name" value="WD40_repeat_dom_sf"/>
</dbReference>
<dbReference type="InterPro" id="IPR001680">
    <property type="entry name" value="WD40_rpt"/>
</dbReference>
<dbReference type="PANTHER" id="PTHR19847">
    <property type="entry name" value="DDB1- AND CUL4-ASSOCIATED FACTOR 11"/>
    <property type="match status" value="1"/>
</dbReference>
<dbReference type="PANTHER" id="PTHR19847:SF7">
    <property type="entry name" value="DDB1- AND CUL4-ASSOCIATED FACTOR 11"/>
    <property type="match status" value="1"/>
</dbReference>
<dbReference type="Pfam" id="PF00400">
    <property type="entry name" value="WD40"/>
    <property type="match status" value="3"/>
</dbReference>
<dbReference type="PIRSF" id="PIRSF038135">
    <property type="entry name" value="WD_repeat_p23"/>
    <property type="match status" value="1"/>
</dbReference>
<dbReference type="SMART" id="SM00320">
    <property type="entry name" value="WD40"/>
    <property type="match status" value="6"/>
</dbReference>
<dbReference type="SUPFAM" id="SSF50978">
    <property type="entry name" value="WD40 repeat-like"/>
    <property type="match status" value="1"/>
</dbReference>
<dbReference type="PROSITE" id="PS50082">
    <property type="entry name" value="WD_REPEATS_2"/>
    <property type="match status" value="3"/>
</dbReference>
<dbReference type="PROSITE" id="PS50294">
    <property type="entry name" value="WD_REPEATS_REGION"/>
    <property type="match status" value="1"/>
</dbReference>
<comment type="function">
    <text evidence="2 3 4">Involved in regulation of lifespan (PubMed:17411345). Required for dopaminergic CEP neuron degeneration in response to Mn(2+) (PubMed:23721876). Inhibits the skn-1-mediated up-regulation of tatn-1 (PubMed:31043480).</text>
</comment>
<comment type="alternative products">
    <event type="alternative splicing"/>
    <isoform>
        <id>P90794-1</id>
        <name evidence="6">a</name>
        <sequence type="displayed"/>
    </isoform>
    <isoform>
        <id>P90794-2</id>
        <name evidence="7">b</name>
        <sequence type="described" ref="VSP_036072 VSP_036073"/>
    </isoform>
</comment>
<comment type="disruption phenotype">
    <text evidence="2 3 4">Increased lifespan (PubMed:17411345). RNAi-mediated knockdown significantly prevents Mn(2+)-induced dopaminergic CEP neuron degeneration (PubMed:23721876). RNAi-mediated knockdown increases tatn-1 expression and enzymatic activity (PubMed:31043480).</text>
</comment>
<comment type="similarity">
    <text evidence="5">Belongs to the WD repeat LEC14B family.</text>
</comment>
<proteinExistence type="inferred from homology"/>
<gene>
    <name evidence="6" type="primary">wdr-23</name>
    <name evidence="6" type="ORF">D2030.9</name>
</gene>
<feature type="chain" id="PRO_0000051510" description="DDB1- and CUL4-associated factor 11 homolog">
    <location>
        <begin position="1"/>
        <end position="571"/>
    </location>
</feature>
<feature type="repeat" description="WD 1">
    <location>
        <begin position="162"/>
        <end position="201"/>
    </location>
</feature>
<feature type="repeat" description="WD 2">
    <location>
        <begin position="266"/>
        <end position="305"/>
    </location>
</feature>
<feature type="repeat" description="WD 3">
    <location>
        <begin position="309"/>
        <end position="349"/>
    </location>
</feature>
<feature type="repeat" description="WD 4">
    <location>
        <begin position="357"/>
        <end position="396"/>
    </location>
</feature>
<feature type="repeat" description="WD 5">
    <location>
        <begin position="435"/>
        <end position="479"/>
    </location>
</feature>
<feature type="repeat" description="WD 6">
    <location>
        <begin position="482"/>
        <end position="521"/>
    </location>
</feature>
<feature type="region of interest" description="Disordered" evidence="1">
    <location>
        <begin position="51"/>
        <end position="75"/>
    </location>
</feature>
<feature type="compositionally biased region" description="Acidic residues" evidence="1">
    <location>
        <begin position="60"/>
        <end position="69"/>
    </location>
</feature>
<feature type="splice variant" id="VSP_036072" description="In isoform b." evidence="5">
    <location>
        <begin position="1"/>
        <end position="41"/>
    </location>
</feature>
<feature type="splice variant" id="VSP_036073" description="In isoform b." evidence="5">
    <original>TAAEIVAHQRMKP</original>
    <variation>MPYKRHSSSNLKR</variation>
    <location>
        <begin position="42"/>
        <end position="54"/>
    </location>
</feature>
<evidence type="ECO:0000256" key="1">
    <source>
        <dbReference type="SAM" id="MobiDB-lite"/>
    </source>
</evidence>
<evidence type="ECO:0000269" key="2">
    <source>
    </source>
</evidence>
<evidence type="ECO:0000269" key="3">
    <source>
    </source>
</evidence>
<evidence type="ECO:0000269" key="4">
    <source>
    </source>
</evidence>
<evidence type="ECO:0000305" key="5"/>
<evidence type="ECO:0000312" key="6">
    <source>
        <dbReference type="WormBase" id="D2030.9a"/>
    </source>
</evidence>
<evidence type="ECO:0000312" key="7">
    <source>
        <dbReference type="WormBase" id="D2030.9b"/>
    </source>
</evidence>
<name>DCA11_CAEEL</name>
<organism>
    <name type="scientific">Caenorhabditis elegans</name>
    <dbReference type="NCBI Taxonomy" id="6239"/>
    <lineage>
        <taxon>Eukaryota</taxon>
        <taxon>Metazoa</taxon>
        <taxon>Ecdysozoa</taxon>
        <taxon>Nematoda</taxon>
        <taxon>Chromadorea</taxon>
        <taxon>Rhabditida</taxon>
        <taxon>Rhabditina</taxon>
        <taxon>Rhabditomorpha</taxon>
        <taxon>Rhabditoidea</taxon>
        <taxon>Rhabditidae</taxon>
        <taxon>Peloderinae</taxon>
        <taxon>Caenorhabditis</taxon>
    </lineage>
</organism>
<reference key="1">
    <citation type="journal article" date="1998" name="Science">
        <title>Genome sequence of the nematode C. elegans: a platform for investigating biology.</title>
        <authorList>
            <consortium name="The C. elegans sequencing consortium"/>
        </authorList>
    </citation>
    <scope>NUCLEOTIDE SEQUENCE [LARGE SCALE GENOMIC DNA]</scope>
    <source>
        <strain>Bristol N2</strain>
    </source>
</reference>
<reference key="2">
    <citation type="journal article" date="2007" name="PLoS Genet.">
        <title>Lifespan regulation by evolutionarily conserved genes essential for viability.</title>
        <authorList>
            <person name="Curran S.P."/>
            <person name="Ruvkun G."/>
        </authorList>
    </citation>
    <scope>FUNCTION</scope>
    <scope>DISRUPTION PHENOTYPE</scope>
</reference>
<reference key="3">
    <citation type="journal article" date="2013" name="NeuroToxicology">
        <title>The Nrf2/SKN-1-dependent glutathione S-transferase pi homologue GST-1 inhibits dopamine neuron degeneration in a Caenorhabditis elegans model of manganism.</title>
        <authorList>
            <person name="Settivari R."/>
            <person name="VanDuyn N."/>
            <person name="LeVora J."/>
            <person name="Nass R."/>
        </authorList>
    </citation>
    <scope>FUNCTION</scope>
    <scope>DISRUPTION PHENOTYPE</scope>
</reference>
<reference key="4">
    <citation type="journal article" date="2019" name="J. Biol. Chem.">
        <title>Tyrosine aminotransferase is involved in the oxidative stress response by metabolizing meta-tyrosine in Caenorhabditis elegans.</title>
        <authorList>
            <person name="Ipson B.R."/>
            <person name="Green R.A."/>
            <person name="Wilson J.T."/>
            <person name="Watson J.N."/>
            <person name="Faull K.F."/>
            <person name="Fisher A.L."/>
        </authorList>
    </citation>
    <scope>FUNCTION</scope>
    <scope>DISRUPTION PHENOTYPE</scope>
</reference>
<protein>
    <recommendedName>
        <fullName>DDB1- and CUL4-associated factor 11 homolog</fullName>
    </recommendedName>
    <alternativeName>
        <fullName>WD repeat-containing protein 23</fullName>
    </alternativeName>
</protein>
<keyword id="KW-0025">Alternative splicing</keyword>
<keyword id="KW-1185">Reference proteome</keyword>
<keyword id="KW-0677">Repeat</keyword>
<keyword id="KW-0853">WD repeat</keyword>
<sequence length="571" mass="65171">MGNWITSTFLRFDLFQRHQPNRFLEYTRVQHSNQSPAYSVRTAAEIVAHQRMKPNHSNDSDTDFSSDDEGCPKMTPHEEQQMFEREQHIAFSGRCHIGDPESCTQLRNEINSRCGPRPSTSNNMEFILNRDLQKRGTSISNPRTVARVLNSHLPNQKRRVDRVATKSFCTQYIQNGTKIVVASQDEKIRFYQRNPDKSKYRSKYMKSDELRVDQCGWSILDTAISLNGDLIAYGTWKDAVFVGKLDFTERQNITWFPIDLNGEPGRDHCAVFCVKFSDSSEQIVCGTSQYSIHVFDVEQRRRIRTIVNAHEDDVNSVCFADLGSNLIYSAGDDGLVKVWDKRAWSDGDVEPVGVFAGHRDGVTHVDSRQDERYLLSNSKDQTIKVWDLRKFSNMSGVEATRACVQSQHWDYRWQPAPPGLCQPVAGDTSVMTLRGHSVLHTLVRANFSPESTGRRYIYTGCARGEVVVYDIMSGTVSRRLKGHTAVVRECDWHPTENEIVSSAWDGVTTVWTWDERQEGVIAPYDHPNISQFGDEDSCDELFQPVKKQCRRQRKTMSSRGHPCSSSSISQN</sequence>
<accession>P90794</accession>
<accession>Q9U3K9</accession>